<protein>
    <recommendedName>
        <fullName>3-hydroxy-3-methylglutaryl-coenzyme A reductase 1</fullName>
        <shortName>HMG-CoA reductase 1</shortName>
        <ecNumber>1.1.1.34</ecNumber>
    </recommendedName>
</protein>
<evidence type="ECO:0000250" key="1"/>
<evidence type="ECO:0000255" key="2"/>
<evidence type="ECO:0000255" key="3">
    <source>
        <dbReference type="PROSITE-ProRule" id="PRU10003"/>
    </source>
</evidence>
<evidence type="ECO:0000256" key="4">
    <source>
        <dbReference type="SAM" id="MobiDB-lite"/>
    </source>
</evidence>
<evidence type="ECO:0000305" key="5"/>
<comment type="function">
    <text>Catalyzes the synthesis of mevalonate. The specific precursor of all isoprenoid compounds present in plants.</text>
</comment>
<comment type="catalytic activity">
    <reaction evidence="3">
        <text>(R)-mevalonate + 2 NADP(+) + CoA = (3S)-3-hydroxy-3-methylglutaryl-CoA + 2 NADPH + 2 H(+)</text>
        <dbReference type="Rhea" id="RHEA:15989"/>
        <dbReference type="ChEBI" id="CHEBI:15378"/>
        <dbReference type="ChEBI" id="CHEBI:36464"/>
        <dbReference type="ChEBI" id="CHEBI:43074"/>
        <dbReference type="ChEBI" id="CHEBI:57287"/>
        <dbReference type="ChEBI" id="CHEBI:57783"/>
        <dbReference type="ChEBI" id="CHEBI:58349"/>
        <dbReference type="EC" id="1.1.1.34"/>
    </reaction>
</comment>
<comment type="pathway">
    <text>Metabolic intermediate biosynthesis; (R)-mevalonate biosynthesis; (R)-mevalonate from acetyl-CoA: step 3/3.</text>
</comment>
<comment type="subcellular location">
    <subcellularLocation>
        <location>Endoplasmic reticulum membrane</location>
        <topology>Single-pass membrane protein</topology>
    </subcellularLocation>
</comment>
<comment type="similarity">
    <text evidence="5">Belongs to the HMG-CoA reductase family.</text>
</comment>
<comment type="sequence caution" evidence="5">
    <conflict type="erroneous gene model prediction">
        <sequence resource="EMBL-CDS" id="BAF09829"/>
    </conflict>
</comment>
<gene>
    <name type="primary">HMG1</name>
    <name type="ordered locus">Os02g0713900</name>
    <name type="ordered locus">LOC_Os02g48330</name>
</gene>
<dbReference type="EC" id="1.1.1.34"/>
<dbReference type="EMBL" id="AP008208">
    <property type="protein sequence ID" value="BAF09829.1"/>
    <property type="status" value="ALT_SEQ"/>
    <property type="molecule type" value="Genomic_DNA"/>
</dbReference>
<dbReference type="EMBL" id="AP014958">
    <property type="status" value="NOT_ANNOTATED_CDS"/>
    <property type="molecule type" value="Genomic_DNA"/>
</dbReference>
<dbReference type="RefSeq" id="XP_015623837.1">
    <property type="nucleotide sequence ID" value="XM_015768351.1"/>
</dbReference>
<dbReference type="SMR" id="Q0DY59"/>
<dbReference type="FunCoup" id="Q0DY59">
    <property type="interactions" value="6"/>
</dbReference>
<dbReference type="STRING" id="39947.Q0DY59"/>
<dbReference type="GlyCosmos" id="Q0DY59">
    <property type="glycosylation" value="2 sites, No reported glycans"/>
</dbReference>
<dbReference type="PaxDb" id="39947-Q0DY59"/>
<dbReference type="eggNOG" id="KOG2480">
    <property type="taxonomic scope" value="Eukaryota"/>
</dbReference>
<dbReference type="InParanoid" id="Q0DY59"/>
<dbReference type="OrthoDB" id="310654at2759"/>
<dbReference type="PlantReactome" id="R-OSA-1119615">
    <property type="pathway name" value="Mevalonate pathway"/>
</dbReference>
<dbReference type="UniPathway" id="UPA00058">
    <property type="reaction ID" value="UER00103"/>
</dbReference>
<dbReference type="Proteomes" id="UP000000763">
    <property type="component" value="Chromosome 2"/>
</dbReference>
<dbReference type="Proteomes" id="UP000059680">
    <property type="component" value="Chromosome 2"/>
</dbReference>
<dbReference type="GO" id="GO:0005789">
    <property type="term" value="C:endoplasmic reticulum membrane"/>
    <property type="evidence" value="ECO:0000318"/>
    <property type="project" value="GO_Central"/>
</dbReference>
<dbReference type="GO" id="GO:0005778">
    <property type="term" value="C:peroxisomal membrane"/>
    <property type="evidence" value="ECO:0000318"/>
    <property type="project" value="GO_Central"/>
</dbReference>
<dbReference type="GO" id="GO:0004420">
    <property type="term" value="F:hydroxymethylglutaryl-CoA reductase (NADPH) activity"/>
    <property type="evidence" value="ECO:0000318"/>
    <property type="project" value="GO_Central"/>
</dbReference>
<dbReference type="GO" id="GO:0015936">
    <property type="term" value="P:coenzyme A metabolic process"/>
    <property type="evidence" value="ECO:0007669"/>
    <property type="project" value="InterPro"/>
</dbReference>
<dbReference type="GO" id="GO:0008299">
    <property type="term" value="P:isoprenoid biosynthetic process"/>
    <property type="evidence" value="ECO:0000318"/>
    <property type="project" value="GO_Central"/>
</dbReference>
<dbReference type="GO" id="GO:0016126">
    <property type="term" value="P:sterol biosynthetic process"/>
    <property type="evidence" value="ECO:0000318"/>
    <property type="project" value="GO_Central"/>
</dbReference>
<dbReference type="CDD" id="cd00643">
    <property type="entry name" value="HMG-CoA_reductase_classI"/>
    <property type="match status" value="1"/>
</dbReference>
<dbReference type="FunFam" id="1.10.3270.10:FF:000002">
    <property type="entry name" value="3-hydroxy-3-methylglutaryl coenzyme A reductase"/>
    <property type="match status" value="1"/>
</dbReference>
<dbReference type="FunFam" id="3.30.70.420:FF:000001">
    <property type="entry name" value="3-hydroxy-3-methylglutaryl coenzyme A reductase"/>
    <property type="match status" value="1"/>
</dbReference>
<dbReference type="FunFam" id="3.90.770.10:FF:000001">
    <property type="entry name" value="3-hydroxy-3-methylglutaryl coenzyme A reductase"/>
    <property type="match status" value="1"/>
</dbReference>
<dbReference type="Gene3D" id="3.90.770.10">
    <property type="entry name" value="3-hydroxy-3-methylglutaryl-coenzyme A Reductase, Chain A, domain 2"/>
    <property type="match status" value="1"/>
</dbReference>
<dbReference type="Gene3D" id="1.10.3270.10">
    <property type="entry name" value="HMGR, N-terminal domain"/>
    <property type="match status" value="1"/>
</dbReference>
<dbReference type="Gene3D" id="3.30.70.420">
    <property type="entry name" value="Hydroxymethylglutaryl-CoA reductase, class I/II, NAD/NADP-binding domain"/>
    <property type="match status" value="1"/>
</dbReference>
<dbReference type="InterPro" id="IPR002202">
    <property type="entry name" value="HMG_CoA_Rdtase"/>
</dbReference>
<dbReference type="InterPro" id="IPR023074">
    <property type="entry name" value="HMG_CoA_Rdtase_cat_sf"/>
</dbReference>
<dbReference type="InterPro" id="IPR023076">
    <property type="entry name" value="HMG_CoA_Rdtase_CS"/>
</dbReference>
<dbReference type="InterPro" id="IPR004554">
    <property type="entry name" value="HMG_CoA_Rdtase_eu_arc"/>
</dbReference>
<dbReference type="InterPro" id="IPR023282">
    <property type="entry name" value="HMG_CoA_Rdtase_N"/>
</dbReference>
<dbReference type="InterPro" id="IPR009023">
    <property type="entry name" value="HMG_CoA_Rdtase_NAD(P)-bd_sf"/>
</dbReference>
<dbReference type="InterPro" id="IPR009029">
    <property type="entry name" value="HMG_CoA_Rdtase_sub-bd_dom_sf"/>
</dbReference>
<dbReference type="NCBIfam" id="TIGR00533">
    <property type="entry name" value="HMG_CoA_R_NADP"/>
    <property type="match status" value="1"/>
</dbReference>
<dbReference type="PANTHER" id="PTHR10572">
    <property type="entry name" value="3-HYDROXY-3-METHYLGLUTARYL-COENZYME A REDUCTASE"/>
    <property type="match status" value="1"/>
</dbReference>
<dbReference type="PANTHER" id="PTHR10572:SF14">
    <property type="entry name" value="3-HYDROXY-3-METHYLGLUTARYL-COENZYME A REDUCTASE 1"/>
    <property type="match status" value="1"/>
</dbReference>
<dbReference type="Pfam" id="PF00368">
    <property type="entry name" value="HMG-CoA_red"/>
    <property type="match status" value="1"/>
</dbReference>
<dbReference type="PRINTS" id="PR00071">
    <property type="entry name" value="HMGCOARDTASE"/>
</dbReference>
<dbReference type="SUPFAM" id="SSF55035">
    <property type="entry name" value="NAD-binding domain of HMG-CoA reductase"/>
    <property type="match status" value="1"/>
</dbReference>
<dbReference type="SUPFAM" id="SSF56542">
    <property type="entry name" value="Substrate-binding domain of HMG-CoA reductase"/>
    <property type="match status" value="1"/>
</dbReference>
<dbReference type="PROSITE" id="PS00066">
    <property type="entry name" value="HMG_COA_REDUCTASE_1"/>
    <property type="match status" value="1"/>
</dbReference>
<dbReference type="PROSITE" id="PS00318">
    <property type="entry name" value="HMG_COA_REDUCTASE_2"/>
    <property type="match status" value="1"/>
</dbReference>
<dbReference type="PROSITE" id="PS01192">
    <property type="entry name" value="HMG_COA_REDUCTASE_3"/>
    <property type="match status" value="1"/>
</dbReference>
<dbReference type="PROSITE" id="PS50065">
    <property type="entry name" value="HMG_COA_REDUCTASE_4"/>
    <property type="match status" value="1"/>
</dbReference>
<organism>
    <name type="scientific">Oryza sativa subsp. japonica</name>
    <name type="common">Rice</name>
    <dbReference type="NCBI Taxonomy" id="39947"/>
    <lineage>
        <taxon>Eukaryota</taxon>
        <taxon>Viridiplantae</taxon>
        <taxon>Streptophyta</taxon>
        <taxon>Embryophyta</taxon>
        <taxon>Tracheophyta</taxon>
        <taxon>Spermatophyta</taxon>
        <taxon>Magnoliopsida</taxon>
        <taxon>Liliopsida</taxon>
        <taxon>Poales</taxon>
        <taxon>Poaceae</taxon>
        <taxon>BOP clade</taxon>
        <taxon>Oryzoideae</taxon>
        <taxon>Oryzeae</taxon>
        <taxon>Oryzinae</taxon>
        <taxon>Oryza</taxon>
        <taxon>Oryza sativa</taxon>
    </lineage>
</organism>
<feature type="chain" id="PRO_0000114446" description="3-hydroxy-3-methylglutaryl-coenzyme A reductase 1">
    <location>
        <begin position="1"/>
        <end position="532"/>
    </location>
</feature>
<feature type="transmembrane region" description="Helical" evidence="2">
    <location>
        <begin position="63"/>
        <end position="83"/>
    </location>
</feature>
<feature type="region of interest" description="Linker" evidence="1">
    <location>
        <begin position="77"/>
        <end position="117"/>
    </location>
</feature>
<feature type="region of interest" description="Disordered" evidence="4">
    <location>
        <begin position="78"/>
        <end position="111"/>
    </location>
</feature>
<feature type="region of interest" description="Catalytic" evidence="1">
    <location>
        <begin position="118"/>
        <end position="532"/>
    </location>
</feature>
<feature type="compositionally biased region" description="Low complexity" evidence="4">
    <location>
        <begin position="98"/>
        <end position="107"/>
    </location>
</feature>
<feature type="active site" description="Charge relay system" evidence="1">
    <location>
        <position position="211"/>
    </location>
</feature>
<feature type="active site" description="Charge relay system" evidence="1">
    <location>
        <position position="343"/>
    </location>
</feature>
<feature type="active site" description="Charge relay system" evidence="1">
    <location>
        <position position="419"/>
    </location>
</feature>
<feature type="active site" description="Proton donor" evidence="3">
    <location>
        <position position="517"/>
    </location>
</feature>
<feature type="glycosylation site" description="N-linked (GlcNAc...) asparagine" evidence="2">
    <location>
        <position position="275"/>
    </location>
</feature>
<feature type="glycosylation site" description="N-linked (GlcNAc...) asparagine" evidence="2">
    <location>
        <position position="521"/>
    </location>
</feature>
<sequence>MDVRRGGGGGRIVGAARRALTWGALPLPMRITNGLAMVSLVLSSCDLLRLCSDRERPLGGREFATVVYLVSLFAHPDAPATTTGDDDDGQGGSRRARPAAAEPAPMHGHGGGMMEADDEEIVAAVASGALPSHRLESRLGDCRRAARLRREALRRVTGRGVEGLPFDGMDYQAILGQCCEMPVGYVQLPVGVAGPLLLDGREYHVPMATTEGCLVASVNRGCRAISASGGAFSVLLRDAMSRAPAVKLPSAMRAAELKAFAEAPANFELLAAVFNRSSRFGRLQDIRCALAGRNLYMRFSCITGDAMGMNMVSKGVENVLGYLQNVFPDMDVISVSGNYCSDKKPTAVNWIEGRGKSVVCEAIIKGDVVQKVLKTTVEKLVELNIIKNLAGSAVAGALGGFNAHASNIVTALFIATGQDPAQNVESSQCITMLEEVNDGDDLHISVTMPSIEVGTIGGGTCLASQAACLNLLGVKGSNHGSPGANAKRLATIVAGSVLAGELSLLAALASGHLVKSHMMYNRSSKDVAKAAS</sequence>
<name>HMDH1_ORYSJ</name>
<keyword id="KW-0256">Endoplasmic reticulum</keyword>
<keyword id="KW-0325">Glycoprotein</keyword>
<keyword id="KW-0414">Isoprene biosynthesis</keyword>
<keyword id="KW-0472">Membrane</keyword>
<keyword id="KW-0521">NADP</keyword>
<keyword id="KW-0560">Oxidoreductase</keyword>
<keyword id="KW-1185">Reference proteome</keyword>
<keyword id="KW-0812">Transmembrane</keyword>
<keyword id="KW-1133">Transmembrane helix</keyword>
<accession>Q0DY59</accession>
<accession>P48019</accession>
<proteinExistence type="evidence at transcript level"/>
<reference key="1">
    <citation type="journal article" date="2005" name="Nature">
        <title>The map-based sequence of the rice genome.</title>
        <authorList>
            <consortium name="International rice genome sequencing project (IRGSP)"/>
        </authorList>
    </citation>
    <scope>NUCLEOTIDE SEQUENCE [LARGE SCALE GENOMIC DNA]</scope>
    <source>
        <strain>cv. Nipponbare</strain>
    </source>
</reference>
<reference key="2">
    <citation type="journal article" date="2008" name="Nucleic Acids Res.">
        <title>The rice annotation project database (RAP-DB): 2008 update.</title>
        <authorList>
            <consortium name="The rice annotation project (RAP)"/>
        </authorList>
    </citation>
    <scope>GENOME REANNOTATION</scope>
    <source>
        <strain>cv. Nipponbare</strain>
    </source>
</reference>
<reference key="3">
    <citation type="journal article" date="2013" name="Rice">
        <title>Improvement of the Oryza sativa Nipponbare reference genome using next generation sequence and optical map data.</title>
        <authorList>
            <person name="Kawahara Y."/>
            <person name="de la Bastide M."/>
            <person name="Hamilton J.P."/>
            <person name="Kanamori H."/>
            <person name="McCombie W.R."/>
            <person name="Ouyang S."/>
            <person name="Schwartz D.C."/>
            <person name="Tanaka T."/>
            <person name="Wu J."/>
            <person name="Zhou S."/>
            <person name="Childs K.L."/>
            <person name="Davidson R.M."/>
            <person name="Lin H."/>
            <person name="Quesada-Ocampo L."/>
            <person name="Vaillancourt B."/>
            <person name="Sakai H."/>
            <person name="Lee S.S."/>
            <person name="Kim J."/>
            <person name="Numa H."/>
            <person name="Itoh T."/>
            <person name="Buell C.R."/>
            <person name="Matsumoto T."/>
        </authorList>
    </citation>
    <scope>GENOME REANNOTATION</scope>
    <source>
        <strain>cv. Nipponbare</strain>
    </source>
</reference>